<protein>
    <recommendedName>
        <fullName evidence="1">Small ribosomal subunit protein eS27</fullName>
    </recommendedName>
</protein>
<accession>Q973F9</accession>
<reference key="1">
    <citation type="journal article" date="2001" name="DNA Res.">
        <title>Complete genome sequence of an aerobic thermoacidophilic Crenarchaeon, Sulfolobus tokodaii strain7.</title>
        <authorList>
            <person name="Kawarabayasi Y."/>
            <person name="Hino Y."/>
            <person name="Horikawa H."/>
            <person name="Jin-no K."/>
            <person name="Takahashi M."/>
            <person name="Sekine M."/>
            <person name="Baba S."/>
            <person name="Ankai A."/>
            <person name="Kosugi H."/>
            <person name="Hosoyama A."/>
            <person name="Fukui S."/>
            <person name="Nagai Y."/>
            <person name="Nishijima K."/>
            <person name="Otsuka R."/>
            <person name="Nakazawa H."/>
            <person name="Takamiya M."/>
            <person name="Kato Y."/>
            <person name="Yoshizawa T."/>
            <person name="Tanaka T."/>
            <person name="Kudoh Y."/>
            <person name="Yamazaki J."/>
            <person name="Kushida N."/>
            <person name="Oguchi A."/>
            <person name="Aoki K."/>
            <person name="Masuda S."/>
            <person name="Yanagii M."/>
            <person name="Nishimura M."/>
            <person name="Yamagishi A."/>
            <person name="Oshima T."/>
            <person name="Kikuchi H."/>
        </authorList>
    </citation>
    <scope>NUCLEOTIDE SEQUENCE [LARGE SCALE GENOMIC DNA]</scope>
    <source>
        <strain>DSM 16993 / JCM 10545 / NBRC 100140 / 7</strain>
    </source>
</reference>
<keyword id="KW-0479">Metal-binding</keyword>
<keyword id="KW-1185">Reference proteome</keyword>
<keyword id="KW-0687">Ribonucleoprotein</keyword>
<keyword id="KW-0689">Ribosomal protein</keyword>
<keyword id="KW-0862">Zinc</keyword>
<keyword id="KW-0863">Zinc-finger</keyword>
<evidence type="ECO:0000255" key="1">
    <source>
        <dbReference type="HAMAP-Rule" id="MF_00371"/>
    </source>
</evidence>
<dbReference type="EMBL" id="BA000023">
    <property type="protein sequence ID" value="BAB65954.1"/>
    <property type="molecule type" value="Genomic_DNA"/>
</dbReference>
<dbReference type="RefSeq" id="WP_010978936.1">
    <property type="nucleotide sequence ID" value="NC_003106.2"/>
</dbReference>
<dbReference type="SMR" id="Q973F9"/>
<dbReference type="STRING" id="273063.STK_09414"/>
<dbReference type="GeneID" id="1458905"/>
<dbReference type="KEGG" id="sto:STK_09414"/>
<dbReference type="PATRIC" id="fig|273063.9.peg.1052"/>
<dbReference type="eggNOG" id="arCOG04108">
    <property type="taxonomic scope" value="Archaea"/>
</dbReference>
<dbReference type="OrthoDB" id="5718at2157"/>
<dbReference type="Proteomes" id="UP000001015">
    <property type="component" value="Chromosome"/>
</dbReference>
<dbReference type="GO" id="GO:1990904">
    <property type="term" value="C:ribonucleoprotein complex"/>
    <property type="evidence" value="ECO:0007669"/>
    <property type="project" value="UniProtKB-KW"/>
</dbReference>
<dbReference type="GO" id="GO:0005840">
    <property type="term" value="C:ribosome"/>
    <property type="evidence" value="ECO:0007669"/>
    <property type="project" value="UniProtKB-KW"/>
</dbReference>
<dbReference type="GO" id="GO:0003735">
    <property type="term" value="F:structural constituent of ribosome"/>
    <property type="evidence" value="ECO:0007669"/>
    <property type="project" value="InterPro"/>
</dbReference>
<dbReference type="GO" id="GO:0008270">
    <property type="term" value="F:zinc ion binding"/>
    <property type="evidence" value="ECO:0007669"/>
    <property type="project" value="UniProtKB-UniRule"/>
</dbReference>
<dbReference type="GO" id="GO:0006412">
    <property type="term" value="P:translation"/>
    <property type="evidence" value="ECO:0007669"/>
    <property type="project" value="UniProtKB-UniRule"/>
</dbReference>
<dbReference type="Gene3D" id="2.20.25.100">
    <property type="entry name" value="Zn-binding ribosomal proteins"/>
    <property type="match status" value="1"/>
</dbReference>
<dbReference type="HAMAP" id="MF_00371">
    <property type="entry name" value="Ribosomal_eS27"/>
    <property type="match status" value="1"/>
</dbReference>
<dbReference type="InterPro" id="IPR000592">
    <property type="entry name" value="Ribosomal_eS27"/>
</dbReference>
<dbReference type="InterPro" id="IPR023407">
    <property type="entry name" value="Ribosomal_eS27_Zn-bd_dom_sf"/>
</dbReference>
<dbReference type="InterPro" id="IPR011332">
    <property type="entry name" value="Ribosomal_zn-bd"/>
</dbReference>
<dbReference type="NCBIfam" id="NF001629">
    <property type="entry name" value="PRK00415.1"/>
    <property type="match status" value="1"/>
</dbReference>
<dbReference type="PANTHER" id="PTHR11594">
    <property type="entry name" value="40S RIBOSOMAL PROTEIN S27"/>
    <property type="match status" value="1"/>
</dbReference>
<dbReference type="Pfam" id="PF01667">
    <property type="entry name" value="Ribosomal_S27e"/>
    <property type="match status" value="1"/>
</dbReference>
<dbReference type="SUPFAM" id="SSF57829">
    <property type="entry name" value="Zn-binding ribosomal proteins"/>
    <property type="match status" value="1"/>
</dbReference>
<dbReference type="PROSITE" id="PS01168">
    <property type="entry name" value="RIBOSOMAL_S27E"/>
    <property type="match status" value="1"/>
</dbReference>
<gene>
    <name evidence="1" type="primary">rps27e</name>
    <name type="ordered locus">STK_09414</name>
    <name type="ORF">STS105</name>
</gene>
<proteinExistence type="inferred from homology"/>
<sequence>MKAKFKVLIPEPKSKFIRIKCPNCGNEQTVFSHATFPVRCLSCGTQLVYPRGGKAKIVGETVRILG</sequence>
<organism>
    <name type="scientific">Sulfurisphaera tokodaii (strain DSM 16993 / JCM 10545 / NBRC 100140 / 7)</name>
    <name type="common">Sulfolobus tokodaii</name>
    <dbReference type="NCBI Taxonomy" id="273063"/>
    <lineage>
        <taxon>Archaea</taxon>
        <taxon>Thermoproteota</taxon>
        <taxon>Thermoprotei</taxon>
        <taxon>Sulfolobales</taxon>
        <taxon>Sulfolobaceae</taxon>
        <taxon>Sulfurisphaera</taxon>
    </lineage>
</organism>
<comment type="cofactor">
    <cofactor evidence="1">
        <name>Zn(2+)</name>
        <dbReference type="ChEBI" id="CHEBI:29105"/>
    </cofactor>
    <text evidence="1">Binds 1 zinc ion per subunit.</text>
</comment>
<comment type="subunit">
    <text evidence="1">Part of the 30S ribosomal subunit.</text>
</comment>
<comment type="similarity">
    <text evidence="1">Belongs to the eukaryotic ribosomal protein eS27 family.</text>
</comment>
<feature type="chain" id="PRO_0000149083" description="Small ribosomal subunit protein eS27">
    <location>
        <begin position="1"/>
        <end position="66"/>
    </location>
</feature>
<feature type="zinc finger region" description="C4-type" evidence="1">
    <location>
        <begin position="21"/>
        <end position="43"/>
    </location>
</feature>
<feature type="binding site" evidence="1">
    <location>
        <position position="21"/>
    </location>
    <ligand>
        <name>Zn(2+)</name>
        <dbReference type="ChEBI" id="CHEBI:29105"/>
    </ligand>
</feature>
<feature type="binding site" evidence="1">
    <location>
        <position position="24"/>
    </location>
    <ligand>
        <name>Zn(2+)</name>
        <dbReference type="ChEBI" id="CHEBI:29105"/>
    </ligand>
</feature>
<feature type="binding site" evidence="1">
    <location>
        <position position="40"/>
    </location>
    <ligand>
        <name>Zn(2+)</name>
        <dbReference type="ChEBI" id="CHEBI:29105"/>
    </ligand>
</feature>
<feature type="binding site" evidence="1">
    <location>
        <position position="43"/>
    </location>
    <ligand>
        <name>Zn(2+)</name>
        <dbReference type="ChEBI" id="CHEBI:29105"/>
    </ligand>
</feature>
<name>RS27_SULTO</name>